<organism>
    <name type="scientific">Blaberus craniifer</name>
    <name type="common">Death's head cockroach</name>
    <dbReference type="NCBI Taxonomy" id="6982"/>
    <lineage>
        <taxon>Eukaryota</taxon>
        <taxon>Metazoa</taxon>
        <taxon>Ecdysozoa</taxon>
        <taxon>Arthropoda</taxon>
        <taxon>Hexapoda</taxon>
        <taxon>Insecta</taxon>
        <taxon>Pterygota</taxon>
        <taxon>Neoptera</taxon>
        <taxon>Polyneoptera</taxon>
        <taxon>Dictyoptera</taxon>
        <taxon>Blattodea</taxon>
        <taxon>Blaberoidea</taxon>
        <taxon>Blaberidae</taxon>
        <taxon>Blaberinae</taxon>
        <taxon>Blaberus</taxon>
    </lineage>
</organism>
<evidence type="ECO:0000255" key="1">
    <source>
        <dbReference type="PROSITE-ProRule" id="PRU00497"/>
    </source>
</evidence>
<evidence type="ECO:0000269" key="2">
    <source>
    </source>
</evidence>
<dbReference type="GO" id="GO:0062129">
    <property type="term" value="C:chitin-based extracellular matrix"/>
    <property type="evidence" value="ECO:0007669"/>
    <property type="project" value="TreeGrafter"/>
</dbReference>
<dbReference type="GO" id="GO:0008010">
    <property type="term" value="F:structural constituent of chitin-based larval cuticle"/>
    <property type="evidence" value="ECO:0007669"/>
    <property type="project" value="TreeGrafter"/>
</dbReference>
<dbReference type="InterPro" id="IPR050468">
    <property type="entry name" value="Cuticle_Struct_Prot"/>
</dbReference>
<dbReference type="InterPro" id="IPR000618">
    <property type="entry name" value="Insect_cuticle"/>
</dbReference>
<dbReference type="PANTHER" id="PTHR10380">
    <property type="entry name" value="CUTICLE PROTEIN"/>
    <property type="match status" value="1"/>
</dbReference>
<dbReference type="PANTHER" id="PTHR10380:SF196">
    <property type="entry name" value="CUTICULAR PROTEIN 72EA"/>
    <property type="match status" value="1"/>
</dbReference>
<dbReference type="Pfam" id="PF00379">
    <property type="entry name" value="Chitin_bind_4"/>
    <property type="match status" value="1"/>
</dbReference>
<dbReference type="PROSITE" id="PS51155">
    <property type="entry name" value="CHIT_BIND_RR_2"/>
    <property type="match status" value="1"/>
</dbReference>
<protein>
    <recommendedName>
        <fullName>Cuticle protein 6</fullName>
    </recommendedName>
    <alternativeName>
        <fullName>BcNCP14.9</fullName>
    </alternativeName>
</protein>
<accession>P82119</accession>
<reference key="1">
    <citation type="journal article" date="2000" name="Insect Biochem. Mol. Biol.">
        <title>Studies on proteins in post-ecdysial nymphal cuticle of locust, Locusta migratoria, and cockroach, Blaberus craniifer.</title>
        <authorList>
            <person name="Andersen S.O."/>
        </authorList>
    </citation>
    <scope>PROTEIN SEQUENCE</scope>
    <scope>PYROGLUTAMATE FORMATION AT GLN-1</scope>
    <scope>MASS SPECTROMETRY</scope>
    <source>
        <tissue>Fifth instar larvae</tissue>
    </source>
</reference>
<sequence length="139" mass="14949">QYVYPVLPYAPIHHYTVPVQVSTQYHAQDILGQFAFHHAGDNQVRTETKSFDGSVRGLYGYVDPTGKLVNVHYVADSNGFRVVGANNLPEAPSAPAVPDVKGPEPVQDTPEVVAARAAFQKSYDEAAQAAAVSPDVQVS</sequence>
<name>CUO6_BLACR</name>
<comment type="developmental stage">
    <text>Expressed in post-ecdysial nymphs.</text>
</comment>
<comment type="mass spectrometry" mass="14932.8" method="MALDI" evidence="2"/>
<proteinExistence type="evidence at protein level"/>
<keyword id="KW-0193">Cuticle</keyword>
<keyword id="KW-0903">Direct protein sequencing</keyword>
<keyword id="KW-0873">Pyrrolidone carboxylic acid</keyword>
<feature type="chain" id="PRO_0000196142" description="Cuticle protein 6">
    <location>
        <begin position="1"/>
        <end position="139"/>
    </location>
</feature>
<feature type="domain" description="Chitin-binding type R&amp;R" evidence="1">
    <location>
        <begin position="31"/>
        <end position="92"/>
    </location>
</feature>
<feature type="modified residue" description="Pyrrolidone carboxylic acid" evidence="2">
    <location>
        <position position="1"/>
    </location>
</feature>